<proteinExistence type="inferred from homology"/>
<sequence length="88" mass="9933">MQAEIHPNYRPVVFLDATTGKKFLSASTVTSNDTTEFEGQEYPVIRMDITSDSHPFYTGKQKFTQADGAVDKFNKKFAGFGFKNNEDK</sequence>
<keyword id="KW-1185">Reference proteome</keyword>
<keyword id="KW-0687">Ribonucleoprotein</keyword>
<keyword id="KW-0689">Ribosomal protein</keyword>
<evidence type="ECO:0000255" key="1">
    <source>
        <dbReference type="HAMAP-Rule" id="MF_00502"/>
    </source>
</evidence>
<evidence type="ECO:0000305" key="2"/>
<gene>
    <name evidence="1" type="primary">rpmE2</name>
    <name type="ordered locus">LCK_00362</name>
</gene>
<comment type="subunit">
    <text evidence="1">Part of the 50S ribosomal subunit.</text>
</comment>
<comment type="similarity">
    <text evidence="1">Belongs to the bacterial ribosomal protein bL31 family. Type B subfamily.</text>
</comment>
<organism>
    <name type="scientific">Leuconostoc citreum (strain KM20)</name>
    <dbReference type="NCBI Taxonomy" id="349519"/>
    <lineage>
        <taxon>Bacteria</taxon>
        <taxon>Bacillati</taxon>
        <taxon>Bacillota</taxon>
        <taxon>Bacilli</taxon>
        <taxon>Lactobacillales</taxon>
        <taxon>Lactobacillaceae</taxon>
        <taxon>Leuconostoc</taxon>
    </lineage>
</organism>
<name>RL31B_LEUCK</name>
<protein>
    <recommendedName>
        <fullName evidence="1">Large ribosomal subunit protein bL31B</fullName>
    </recommendedName>
    <alternativeName>
        <fullName evidence="2">50S ribosomal protein L31 type B</fullName>
    </alternativeName>
</protein>
<feature type="chain" id="PRO_1000126822" description="Large ribosomal subunit protein bL31B">
    <location>
        <begin position="1"/>
        <end position="88"/>
    </location>
</feature>
<reference key="1">
    <citation type="journal article" date="2008" name="J. Bacteriol.">
        <title>Complete genome sequence of Leuconostoc citreum KM20.</title>
        <authorList>
            <person name="Kim J.F."/>
            <person name="Jeong H."/>
            <person name="Lee J.-S."/>
            <person name="Choi S.-H."/>
            <person name="Ha M."/>
            <person name="Hur C.-G."/>
            <person name="Kim J.-S."/>
            <person name="Lee S."/>
            <person name="Park H.-S."/>
            <person name="Park Y.-H."/>
            <person name="Oh T.K."/>
        </authorList>
    </citation>
    <scope>NUCLEOTIDE SEQUENCE [LARGE SCALE GENOMIC DNA]</scope>
    <source>
        <strain>KM20</strain>
    </source>
</reference>
<accession>B1MXE3</accession>
<dbReference type="EMBL" id="DQ489736">
    <property type="protein sequence ID" value="ACA82195.1"/>
    <property type="molecule type" value="Genomic_DNA"/>
</dbReference>
<dbReference type="RefSeq" id="WP_004900125.1">
    <property type="nucleotide sequence ID" value="NC_010471.1"/>
</dbReference>
<dbReference type="SMR" id="B1MXE3"/>
<dbReference type="STRING" id="349519.LCK_00362"/>
<dbReference type="KEGG" id="lci:LCK_00362"/>
<dbReference type="eggNOG" id="COG0254">
    <property type="taxonomic scope" value="Bacteria"/>
</dbReference>
<dbReference type="HOGENOM" id="CLU_114306_2_1_9"/>
<dbReference type="OrthoDB" id="9803251at2"/>
<dbReference type="Proteomes" id="UP000002166">
    <property type="component" value="Chromosome"/>
</dbReference>
<dbReference type="GO" id="GO:1990904">
    <property type="term" value="C:ribonucleoprotein complex"/>
    <property type="evidence" value="ECO:0007669"/>
    <property type="project" value="UniProtKB-KW"/>
</dbReference>
<dbReference type="GO" id="GO:0005840">
    <property type="term" value="C:ribosome"/>
    <property type="evidence" value="ECO:0007669"/>
    <property type="project" value="UniProtKB-KW"/>
</dbReference>
<dbReference type="GO" id="GO:0003735">
    <property type="term" value="F:structural constituent of ribosome"/>
    <property type="evidence" value="ECO:0007669"/>
    <property type="project" value="InterPro"/>
</dbReference>
<dbReference type="GO" id="GO:0006412">
    <property type="term" value="P:translation"/>
    <property type="evidence" value="ECO:0007669"/>
    <property type="project" value="UniProtKB-UniRule"/>
</dbReference>
<dbReference type="Gene3D" id="4.10.830.30">
    <property type="entry name" value="Ribosomal protein L31"/>
    <property type="match status" value="1"/>
</dbReference>
<dbReference type="HAMAP" id="MF_00502">
    <property type="entry name" value="Ribosomal_bL31_2"/>
    <property type="match status" value="1"/>
</dbReference>
<dbReference type="InterPro" id="IPR034704">
    <property type="entry name" value="Ribosomal_bL28/bL31-like_sf"/>
</dbReference>
<dbReference type="InterPro" id="IPR002150">
    <property type="entry name" value="Ribosomal_bL31"/>
</dbReference>
<dbReference type="InterPro" id="IPR027493">
    <property type="entry name" value="Ribosomal_bL31_B"/>
</dbReference>
<dbReference type="InterPro" id="IPR042105">
    <property type="entry name" value="Ribosomal_bL31_sf"/>
</dbReference>
<dbReference type="NCBIfam" id="TIGR00105">
    <property type="entry name" value="L31"/>
    <property type="match status" value="1"/>
</dbReference>
<dbReference type="NCBIfam" id="NF002462">
    <property type="entry name" value="PRK01678.1"/>
    <property type="match status" value="1"/>
</dbReference>
<dbReference type="PANTHER" id="PTHR33280">
    <property type="entry name" value="50S RIBOSOMAL PROTEIN L31, CHLOROPLASTIC"/>
    <property type="match status" value="1"/>
</dbReference>
<dbReference type="PANTHER" id="PTHR33280:SF1">
    <property type="entry name" value="LARGE RIBOSOMAL SUBUNIT PROTEIN BL31C"/>
    <property type="match status" value="1"/>
</dbReference>
<dbReference type="Pfam" id="PF01197">
    <property type="entry name" value="Ribosomal_L31"/>
    <property type="match status" value="1"/>
</dbReference>
<dbReference type="PRINTS" id="PR01249">
    <property type="entry name" value="RIBOSOMALL31"/>
</dbReference>
<dbReference type="SUPFAM" id="SSF143800">
    <property type="entry name" value="L28p-like"/>
    <property type="match status" value="1"/>
</dbReference>